<feature type="chain" id="PRO_0000457492" description="Early transcription factor 82 kDa subunit">
    <location>
        <begin position="1"/>
        <end position="710"/>
    </location>
</feature>
<gene>
    <name type="primary">OPG133</name>
    <name type="synonym">VETFL</name>
    <name type="ORF">MPXVgp118</name>
</gene>
<protein>
    <recommendedName>
        <fullName>Early transcription factor 82 kDa subunit</fullName>
    </recommendedName>
    <alternativeName>
        <fullName>ETF large subunit</fullName>
    </alternativeName>
</protein>
<accession>A0A7H0DNA5</accession>
<evidence type="ECO:0000250" key="1"/>
<evidence type="ECO:0000250" key="2">
    <source>
        <dbReference type="UniProtKB" id="P20636"/>
    </source>
</evidence>
<evidence type="ECO:0000305" key="3"/>
<proteinExistence type="inferred from homology"/>
<name>ETF2_MONPV</name>
<organism>
    <name type="scientific">Monkeypox virus</name>
    <dbReference type="NCBI Taxonomy" id="10244"/>
    <lineage>
        <taxon>Viruses</taxon>
        <taxon>Varidnaviria</taxon>
        <taxon>Bamfordvirae</taxon>
        <taxon>Nucleocytoviricota</taxon>
        <taxon>Pokkesviricetes</taxon>
        <taxon>Chitovirales</taxon>
        <taxon>Poxviridae</taxon>
        <taxon>Chordopoxvirinae</taxon>
        <taxon>Orthopoxvirus</taxon>
    </lineage>
</organism>
<comment type="function">
    <text evidence="2">Acts with RNA polymerase to initiate transcription from early gene promoters. Is recruited by the RPO-associated protein of 94 kDa RAP94/OPG109 to form the early transcription complex, which also contains the core RNA polymerase. ETF heterodimer binds to early gene promoters.</text>
</comment>
<comment type="subunit">
    <text evidence="2">Heterodimer of a 70 kDa and a 82 kDa subunit. Part of the early transcription complex composed of ETF, RAP94/OPG109, and the DNA-directed RNA polymerase.</text>
</comment>
<comment type="subcellular location">
    <subcellularLocation>
        <location evidence="2">Virion</location>
    </subcellularLocation>
    <text evidence="1">All the enzymes and other proteins required to synthesize early mRNAs are packaged within the virion core along with the DNA genome. This is necessary because viral early mRNAs are synthesized within minutes after virus entry into the cell and are extruded through pores in the core particle (By similarity).</text>
</comment>
<comment type="similarity">
    <text evidence="3">Belongs to the poxviridae VETF large subunit family.</text>
</comment>
<dbReference type="EMBL" id="MT903340">
    <property type="protein sequence ID" value="QNP12988.1"/>
    <property type="molecule type" value="Genomic_DNA"/>
</dbReference>
<dbReference type="RefSeq" id="YP_010377115.1">
    <property type="nucleotide sequence ID" value="NC_063383.1"/>
</dbReference>
<dbReference type="SMR" id="A0A7H0DNA5"/>
<dbReference type="GeneID" id="72551528"/>
<dbReference type="Proteomes" id="UP000516359">
    <property type="component" value="Genome"/>
</dbReference>
<dbReference type="GO" id="GO:0044423">
    <property type="term" value="C:virion component"/>
    <property type="evidence" value="ECO:0007669"/>
    <property type="project" value="UniProtKB-KW"/>
</dbReference>
<dbReference type="GO" id="GO:0003677">
    <property type="term" value="F:DNA binding"/>
    <property type="evidence" value="ECO:0007669"/>
    <property type="project" value="UniProtKB-KW"/>
</dbReference>
<dbReference type="GO" id="GO:0045893">
    <property type="term" value="P:positive regulation of DNA-templated transcription"/>
    <property type="evidence" value="ECO:0007669"/>
    <property type="project" value="InterPro"/>
</dbReference>
<dbReference type="InterPro" id="IPR007532">
    <property type="entry name" value="Poxvirus_early-TF_lsu"/>
</dbReference>
<dbReference type="Pfam" id="PF04441">
    <property type="entry name" value="Pox_VERT_large"/>
    <property type="match status" value="1"/>
</dbReference>
<sequence>MRYIVSPQLVLQVGKGQEVERALYLTPYDYIDEKSPIYYFLRSHLNIQRPEIVKRHILLTLRMTQLKGYLGNLLDIKDDIIIYSHKNNLEYSYVDNTIFNPFVYTQKKTLLKNDSFLYNVYSGACDFLVIWVARACDTSIPEFGSYEDVDNNIIKFETMLMEVFPQLDLDITVESKFNNIFRTNLKLTGLKKIIQRVQDLDINYKSLLSRYDEHFINMTGNHFILNDEQLNLSIWDLDSTLALSSDGDTVMINNVKLFTDLVSDIDTQMERIKGDITYKVHLATPINSRIKLDIETSFIFIETATNNILLSSDKKISIILAKNHISIKVKNHIPNIEKYFTFLVIAINAMFNSVQKSSDFTKVETVYWSRICQNTKNKNRKPIIINYLDPGMKKISNNFYRSDEKEVFINDNGIMFTCIDPLGKYNKVGFLNIFHDMRKYCIPCCFLHDQSHRSTFSSCVHQIDVEKKIVSPYILNFGKVVTESKMSFLPIIFDAFLNDGMTANMEQDNKRLKETSGYHIVRCCAGDDIVRLRTISDIIQFVNEDKNILIVNDMIYFPMNATDIGKKIHILIQEIVHEVMIVKKKESSDKIDFFPPNYKLLKDLFPKQTIQTPIHSDAGMVLTTDGFYIDGKLFNEDLSSKYVTFTKNVIASDAVTKYFSPLFKYVISEAKDRFIKTWMINIMIHMNVDPNNIIPTLEKYYPNSGRAQIN</sequence>
<organismHost>
    <name type="scientific">Cynomys gunnisoni</name>
    <name type="common">Gunnison's prairie dog</name>
    <name type="synonym">Spermophilus gunnisoni</name>
    <dbReference type="NCBI Taxonomy" id="45479"/>
</organismHost>
<organismHost>
    <name type="scientific">Cynomys leucurus</name>
    <name type="common">White-tailed prairie dog</name>
    <dbReference type="NCBI Taxonomy" id="99825"/>
</organismHost>
<organismHost>
    <name type="scientific">Cynomys ludovicianus</name>
    <name type="common">Black-tailed prairie dog</name>
    <dbReference type="NCBI Taxonomy" id="45480"/>
</organismHost>
<organismHost>
    <name type="scientific">Cynomys mexicanus</name>
    <name type="common">Mexican prairie dog</name>
    <dbReference type="NCBI Taxonomy" id="99826"/>
</organismHost>
<organismHost>
    <name type="scientific">Cynomys parvidens</name>
    <name type="common">Utah prairie dog</name>
    <dbReference type="NCBI Taxonomy" id="99827"/>
</organismHost>
<organismHost>
    <name type="scientific">Gliridae</name>
    <name type="common">dormice</name>
    <dbReference type="NCBI Taxonomy" id="30650"/>
</organismHost>
<organismHost>
    <name type="scientific">Heliosciurus ruwenzorii</name>
    <name type="common">Ruwenzori sun squirrel</name>
    <dbReference type="NCBI Taxonomy" id="226685"/>
</organismHost>
<organismHost>
    <name type="scientific">Homo sapiens</name>
    <name type="common">Human</name>
    <dbReference type="NCBI Taxonomy" id="9606"/>
</organismHost>
<organismHost>
    <name type="scientific">Mus musculus</name>
    <name type="common">Mouse</name>
    <dbReference type="NCBI Taxonomy" id="10090"/>
</organismHost>
<reference key="1">
    <citation type="journal article" date="2022" name="J. Infect. Dis.">
        <title>Exportation of Monkeypox virus from the African continent.</title>
        <authorList>
            <person name="Mauldin M.R."/>
            <person name="McCollum A.M."/>
            <person name="Nakazawa Y.J."/>
            <person name="Mandra A."/>
            <person name="Whitehouse E.R."/>
            <person name="Davidson W."/>
            <person name="Zhao H."/>
            <person name="Gao J."/>
            <person name="Li Y."/>
            <person name="Doty J."/>
            <person name="Yinka-Ogunleye A."/>
            <person name="Akinpelu A."/>
            <person name="Aruna O."/>
            <person name="Naidoo D."/>
            <person name="Lewandowski K."/>
            <person name="Afrough B."/>
            <person name="Graham V."/>
            <person name="Aarons E."/>
            <person name="Hewson R."/>
            <person name="Vipond R."/>
            <person name="Dunning J."/>
            <person name="Chand M."/>
            <person name="Brown C."/>
            <person name="Cohen-Gihon I."/>
            <person name="Erez N."/>
            <person name="Shifman O."/>
            <person name="Israeli O."/>
            <person name="Sharon M."/>
            <person name="Schwartz E."/>
            <person name="Beth-Din A."/>
            <person name="Zvi A."/>
            <person name="Mak T.M."/>
            <person name="Ng Y.K."/>
            <person name="Cui L."/>
            <person name="Lin R.T.P."/>
            <person name="Olson V.A."/>
            <person name="Brooks T."/>
            <person name="Paran N."/>
            <person name="Ihekweazu C."/>
            <person name="Reynolds M.G."/>
        </authorList>
    </citation>
    <scope>NUCLEOTIDE SEQUENCE [LARGE SCALE GENOMIC DNA]</scope>
    <source>
        <strain>MPXV-M5312_HM12_Rivers</strain>
    </source>
</reference>
<keyword id="KW-0238">DNA-binding</keyword>
<keyword id="KW-1185">Reference proteome</keyword>
<keyword id="KW-0804">Transcription</keyword>
<keyword id="KW-0805">Transcription regulation</keyword>
<keyword id="KW-0946">Virion</keyword>